<reference key="1">
    <citation type="journal article" date="1996" name="DNA Res.">
        <title>Sequence analysis of the genome of the unicellular cyanobacterium Synechocystis sp. strain PCC6803. II. Sequence determination of the entire genome and assignment of potential protein-coding regions.</title>
        <authorList>
            <person name="Kaneko T."/>
            <person name="Sato S."/>
            <person name="Kotani H."/>
            <person name="Tanaka A."/>
            <person name="Asamizu E."/>
            <person name="Nakamura Y."/>
            <person name="Miyajima N."/>
            <person name="Hirosawa M."/>
            <person name="Sugiura M."/>
            <person name="Sasamoto S."/>
            <person name="Kimura T."/>
            <person name="Hosouchi T."/>
            <person name="Matsuno A."/>
            <person name="Muraki A."/>
            <person name="Nakazaki N."/>
            <person name="Naruo K."/>
            <person name="Okumura S."/>
            <person name="Shimpo S."/>
            <person name="Takeuchi C."/>
            <person name="Wada T."/>
            <person name="Watanabe A."/>
            <person name="Yamada M."/>
            <person name="Yasuda M."/>
            <person name="Tabata S."/>
        </authorList>
    </citation>
    <scope>NUCLEOTIDE SEQUENCE [LARGE SCALE GENOMIC DNA]</scope>
    <source>
        <strain>ATCC 27184 / PCC 6803 / Kazusa</strain>
    </source>
</reference>
<keyword id="KW-0067">ATP-binding</keyword>
<keyword id="KW-0414">Isoprene biosynthesis</keyword>
<keyword id="KW-0418">Kinase</keyword>
<keyword id="KW-0547">Nucleotide-binding</keyword>
<keyword id="KW-1185">Reference proteome</keyword>
<keyword id="KW-0808">Transferase</keyword>
<sequence>MHSYTLHAPAKINLFLEILGDRPDGFHELVMVLQSIALGDKITVRANGTDDIRLSCGDSPLANDATNLAYRAAQLMINNFPQAHDNYGGVDITLTKHIPMAAGLAGGSADAAAVLVGLDLLWNLGLTRPELEQLAAQLGSDIPFCIGGGTAIATGRGEILDPLPDGNCFWVVLAKHRSIEVSTPWAYQTYRQKFGKNYLNDDQSQRARRKTIHAGPLLQGIQHRNPGQIASHIHNDLEKVVLPAHQPVAQLRQVLQSAGGLGTMMSGSGPSVFTLCREQAEAEQVLAIAKEKLNDPDVDFWLTHTIGHGIQIMNN</sequence>
<proteinExistence type="inferred from homology"/>
<gene>
    <name evidence="1" type="primary">ispE</name>
    <name type="ordered locus">sll0711</name>
</gene>
<feature type="chain" id="PRO_0000189276" description="4-diphosphocytidyl-2-C-methyl-D-erythritol kinase">
    <location>
        <begin position="1"/>
        <end position="315"/>
    </location>
</feature>
<feature type="active site" evidence="1">
    <location>
        <position position="11"/>
    </location>
</feature>
<feature type="active site" evidence="1">
    <location>
        <position position="141"/>
    </location>
</feature>
<feature type="binding site" evidence="1">
    <location>
        <begin position="99"/>
        <end position="109"/>
    </location>
    <ligand>
        <name>ATP</name>
        <dbReference type="ChEBI" id="CHEBI:30616"/>
    </ligand>
</feature>
<accession>P72663</accession>
<organism>
    <name type="scientific">Synechocystis sp. (strain ATCC 27184 / PCC 6803 / Kazusa)</name>
    <dbReference type="NCBI Taxonomy" id="1111708"/>
    <lineage>
        <taxon>Bacteria</taxon>
        <taxon>Bacillati</taxon>
        <taxon>Cyanobacteriota</taxon>
        <taxon>Cyanophyceae</taxon>
        <taxon>Synechococcales</taxon>
        <taxon>Merismopediaceae</taxon>
        <taxon>Synechocystis</taxon>
    </lineage>
</organism>
<protein>
    <recommendedName>
        <fullName evidence="1">4-diphosphocytidyl-2-C-methyl-D-erythritol kinase</fullName>
        <shortName evidence="1">CMK</shortName>
        <ecNumber evidence="1">2.7.1.148</ecNumber>
    </recommendedName>
    <alternativeName>
        <fullName evidence="1">4-(cytidine-5'-diphospho)-2-C-methyl-D-erythritol kinase</fullName>
    </alternativeName>
</protein>
<dbReference type="EC" id="2.7.1.148" evidence="1"/>
<dbReference type="EMBL" id="BA000022">
    <property type="protein sequence ID" value="BAA16665.1"/>
    <property type="molecule type" value="Genomic_DNA"/>
</dbReference>
<dbReference type="PIR" id="S74513">
    <property type="entry name" value="S74513"/>
</dbReference>
<dbReference type="SMR" id="P72663"/>
<dbReference type="FunCoup" id="P72663">
    <property type="interactions" value="431"/>
</dbReference>
<dbReference type="STRING" id="1148.gene:10497520"/>
<dbReference type="PaxDb" id="1148-1651737"/>
<dbReference type="EnsemblBacteria" id="BAA16665">
    <property type="protein sequence ID" value="BAA16665"/>
    <property type="gene ID" value="BAA16665"/>
</dbReference>
<dbReference type="KEGG" id="syn:sll0711"/>
<dbReference type="eggNOG" id="COG1947">
    <property type="taxonomic scope" value="Bacteria"/>
</dbReference>
<dbReference type="InParanoid" id="P72663"/>
<dbReference type="PhylomeDB" id="P72663"/>
<dbReference type="UniPathway" id="UPA00056">
    <property type="reaction ID" value="UER00094"/>
</dbReference>
<dbReference type="Proteomes" id="UP000001425">
    <property type="component" value="Chromosome"/>
</dbReference>
<dbReference type="GO" id="GO:0050515">
    <property type="term" value="F:4-(cytidine 5'-diphospho)-2-C-methyl-D-erythritol kinase activity"/>
    <property type="evidence" value="ECO:0000318"/>
    <property type="project" value="GO_Central"/>
</dbReference>
<dbReference type="GO" id="GO:0005524">
    <property type="term" value="F:ATP binding"/>
    <property type="evidence" value="ECO:0007669"/>
    <property type="project" value="UniProtKB-UniRule"/>
</dbReference>
<dbReference type="GO" id="GO:0019288">
    <property type="term" value="P:isopentenyl diphosphate biosynthetic process, methylerythritol 4-phosphate pathway"/>
    <property type="evidence" value="ECO:0007669"/>
    <property type="project" value="UniProtKB-UniRule"/>
</dbReference>
<dbReference type="GO" id="GO:0016114">
    <property type="term" value="P:terpenoid biosynthetic process"/>
    <property type="evidence" value="ECO:0007669"/>
    <property type="project" value="InterPro"/>
</dbReference>
<dbReference type="FunFam" id="3.30.230.10:FF:000029">
    <property type="entry name" value="4-diphosphocytidyl-2-C-methyl-D-erythritol kinase"/>
    <property type="match status" value="1"/>
</dbReference>
<dbReference type="FunFam" id="3.30.70.890:FF:000006">
    <property type="entry name" value="4-diphosphocytidyl-2-C-methyl-D-erythritol kinase"/>
    <property type="match status" value="1"/>
</dbReference>
<dbReference type="Gene3D" id="3.30.230.10">
    <property type="match status" value="1"/>
</dbReference>
<dbReference type="Gene3D" id="3.30.70.890">
    <property type="entry name" value="GHMP kinase, C-terminal domain"/>
    <property type="match status" value="1"/>
</dbReference>
<dbReference type="HAMAP" id="MF_00061">
    <property type="entry name" value="IspE"/>
    <property type="match status" value="1"/>
</dbReference>
<dbReference type="InterPro" id="IPR013750">
    <property type="entry name" value="GHMP_kinase_C_dom"/>
</dbReference>
<dbReference type="InterPro" id="IPR036554">
    <property type="entry name" value="GHMP_kinase_C_sf"/>
</dbReference>
<dbReference type="InterPro" id="IPR006204">
    <property type="entry name" value="GHMP_kinase_N_dom"/>
</dbReference>
<dbReference type="InterPro" id="IPR004424">
    <property type="entry name" value="IspE"/>
</dbReference>
<dbReference type="InterPro" id="IPR020568">
    <property type="entry name" value="Ribosomal_Su5_D2-typ_SF"/>
</dbReference>
<dbReference type="InterPro" id="IPR014721">
    <property type="entry name" value="Ribsml_uS5_D2-typ_fold_subgr"/>
</dbReference>
<dbReference type="NCBIfam" id="TIGR00154">
    <property type="entry name" value="ispE"/>
    <property type="match status" value="1"/>
</dbReference>
<dbReference type="PANTHER" id="PTHR43527">
    <property type="entry name" value="4-DIPHOSPHOCYTIDYL-2-C-METHYL-D-ERYTHRITOL KINASE, CHLOROPLASTIC"/>
    <property type="match status" value="1"/>
</dbReference>
<dbReference type="PANTHER" id="PTHR43527:SF2">
    <property type="entry name" value="4-DIPHOSPHOCYTIDYL-2-C-METHYL-D-ERYTHRITOL KINASE, CHLOROPLASTIC"/>
    <property type="match status" value="1"/>
</dbReference>
<dbReference type="Pfam" id="PF08544">
    <property type="entry name" value="GHMP_kinases_C"/>
    <property type="match status" value="1"/>
</dbReference>
<dbReference type="Pfam" id="PF00288">
    <property type="entry name" value="GHMP_kinases_N"/>
    <property type="match status" value="1"/>
</dbReference>
<dbReference type="PIRSF" id="PIRSF010376">
    <property type="entry name" value="IspE"/>
    <property type="match status" value="1"/>
</dbReference>
<dbReference type="SUPFAM" id="SSF55060">
    <property type="entry name" value="GHMP Kinase, C-terminal domain"/>
    <property type="match status" value="1"/>
</dbReference>
<dbReference type="SUPFAM" id="SSF54211">
    <property type="entry name" value="Ribosomal protein S5 domain 2-like"/>
    <property type="match status" value="1"/>
</dbReference>
<evidence type="ECO:0000255" key="1">
    <source>
        <dbReference type="HAMAP-Rule" id="MF_00061"/>
    </source>
</evidence>
<name>ISPE_SYNY3</name>
<comment type="function">
    <text evidence="1">Catalyzes the phosphorylation of the position 2 hydroxy group of 4-diphosphocytidyl-2C-methyl-D-erythritol.</text>
</comment>
<comment type="catalytic activity">
    <reaction evidence="1">
        <text>4-CDP-2-C-methyl-D-erythritol + ATP = 4-CDP-2-C-methyl-D-erythritol 2-phosphate + ADP + H(+)</text>
        <dbReference type="Rhea" id="RHEA:18437"/>
        <dbReference type="ChEBI" id="CHEBI:15378"/>
        <dbReference type="ChEBI" id="CHEBI:30616"/>
        <dbReference type="ChEBI" id="CHEBI:57823"/>
        <dbReference type="ChEBI" id="CHEBI:57919"/>
        <dbReference type="ChEBI" id="CHEBI:456216"/>
        <dbReference type="EC" id="2.7.1.148"/>
    </reaction>
</comment>
<comment type="pathway">
    <text evidence="1">Isoprenoid biosynthesis; isopentenyl diphosphate biosynthesis via DXP pathway; isopentenyl diphosphate from 1-deoxy-D-xylulose 5-phosphate: step 3/6.</text>
</comment>
<comment type="similarity">
    <text evidence="1">Belongs to the GHMP kinase family. IspE subfamily.</text>
</comment>